<comment type="function">
    <text evidence="4 5 6">G-protein coupled receptor for the nlp-40 neuropeptide (PubMed:23583549). The activity of this receptor is mediated by G proteins which activate adenylyl cyclase (PubMed:23583549). Plays a role in the defecation motor program, which is a coordinated series of three muscle contractions that occurs every 45 seconds (PubMed:18852466, PubMed:23583549). Specifically, acts in GABAergic neurons, such as AVL and DVB, to control the expulsion step of defecation (PubMed:18852466, PubMed:23583549). Required for fatty acid uptake and metabolism by intestinal cells and therefore regulates the levels of triglycerides in the intestine (PubMed:25849533).</text>
</comment>
<comment type="subcellular location">
    <subcellularLocation>
        <location evidence="5">Cell membrane</location>
        <topology evidence="1">Multi-pass membrane protein</topology>
    </subcellularLocation>
    <subcellularLocation>
        <location evidence="4">Cell projection</location>
        <location evidence="4">Cilium</location>
    </subcellularLocation>
</comment>
<comment type="tissue specificity">
    <text evidence="4">Expressed in the intestinal muscle, anal depressor, AVL and DVB GABAergic neurons, enteric muscles, the nerve ring, the ventral nerve cord and head mesodermal cells.</text>
</comment>
<comment type="disruption phenotype">
    <text evidence="4">RNAi-mediated knockdown results in a mild defecation defect.</text>
</comment>
<comment type="similarity">
    <text evidence="3">Belongs to the G-protein coupled receptor 1 family.</text>
</comment>
<accession>G5ECD9</accession>
<gene>
    <name evidence="10" type="primary">aex-2</name>
    <name evidence="10" type="ORF">T14B1.2</name>
</gene>
<name>AEX2_CAEEL</name>
<protein>
    <recommendedName>
        <fullName evidence="7">G-protein coupled receptor aex-2</fullName>
    </recommendedName>
    <alternativeName>
        <fullName evidence="10">Aboc, expulsion defective protein 2</fullName>
    </alternativeName>
</protein>
<evidence type="ECO:0000255" key="1"/>
<evidence type="ECO:0000255" key="2">
    <source>
        <dbReference type="PROSITE-ProRule" id="PRU00498"/>
    </source>
</evidence>
<evidence type="ECO:0000255" key="3">
    <source>
        <dbReference type="PROSITE-ProRule" id="PRU00521"/>
    </source>
</evidence>
<evidence type="ECO:0000269" key="4">
    <source>
    </source>
</evidence>
<evidence type="ECO:0000269" key="5">
    <source>
    </source>
</evidence>
<evidence type="ECO:0000269" key="6">
    <source>
    </source>
</evidence>
<evidence type="ECO:0000305" key="7"/>
<evidence type="ECO:0000312" key="8">
    <source>
        <dbReference type="EMBL" id="ACI04534.1"/>
    </source>
</evidence>
<evidence type="ECO:0000312" key="9">
    <source>
        <dbReference type="Proteomes" id="UP000001940"/>
    </source>
</evidence>
<evidence type="ECO:0000312" key="10">
    <source>
        <dbReference type="WormBase" id="T14B1.2"/>
    </source>
</evidence>
<reference evidence="8" key="1">
    <citation type="journal article" date="2008" name="Proc. Natl. Acad. Sci. U.S.A.">
        <title>Intestinal signaling to GABAergic neurons regulates a rhythmic behavior in Caenorhabditis elegans.</title>
        <authorList>
            <person name="Mahoney T.R."/>
            <person name="Luo S."/>
            <person name="Round E.K."/>
            <person name="Brauner M."/>
            <person name="Gottschalk A."/>
            <person name="Thomas J.H."/>
            <person name="Nonet M.L."/>
        </authorList>
    </citation>
    <scope>NUCLEOTIDE SEQUENCE [MRNA]</scope>
    <scope>FUNCTION</scope>
    <scope>SUBCELLULAR LOCATION</scope>
    <scope>TISSUE SPECIFICITY</scope>
    <scope>DISRUPTION PHENOTYPE</scope>
    <scope>MUTAGENESIS OF SER-174 AND ARG-232</scope>
</reference>
<reference evidence="9" key="2">
    <citation type="journal article" date="1998" name="Science">
        <title>Genome sequence of the nematode C. elegans: a platform for investigating biology.</title>
        <authorList>
            <consortium name="The C. elegans sequencing consortium"/>
        </authorList>
    </citation>
    <scope>NUCLEOTIDE SEQUENCE [LARGE SCALE GENOMIC DNA]</scope>
    <source>
        <strain evidence="9">Bristol N2</strain>
    </source>
</reference>
<reference evidence="7" key="3">
    <citation type="journal article" date="2013" name="Curr. Biol.">
        <title>Neuropeptide secreted from a pacemaker activates neurons to control a rhythmic behavior.</title>
        <authorList>
            <person name="Wang H."/>
            <person name="Girskis K."/>
            <person name="Janssen T."/>
            <person name="Chan J.P."/>
            <person name="Dasgupta K."/>
            <person name="Knowles J.A."/>
            <person name="Schoofs L."/>
            <person name="Sieburth D."/>
        </authorList>
    </citation>
    <scope>FUNCTION</scope>
    <scope>SUBCELLULAR LOCATION</scope>
</reference>
<reference evidence="7" key="4">
    <citation type="journal article" date="2015" name="PLoS ONE">
        <title>Aberrant fat metabolism in Caenorhabditis elegans mutants with defects in the defecation motor program.</title>
        <authorList>
            <person name="Sheng M."/>
            <person name="Hosseinzadeh A."/>
            <person name="Muralidharan S.V."/>
            <person name="Gaur R."/>
            <person name="Selstam E."/>
            <person name="Tuck S."/>
        </authorList>
    </citation>
    <scope>FUNCTION</scope>
    <scope>MUTAGENESIS OF ARG-232</scope>
</reference>
<keyword id="KW-1003">Cell membrane</keyword>
<keyword id="KW-0966">Cell projection</keyword>
<keyword id="KW-1015">Disulfide bond</keyword>
<keyword id="KW-0297">G-protein coupled receptor</keyword>
<keyword id="KW-0325">Glycoprotein</keyword>
<keyword id="KW-0472">Membrane</keyword>
<keyword id="KW-0675">Receptor</keyword>
<keyword id="KW-1185">Reference proteome</keyword>
<keyword id="KW-0807">Transducer</keyword>
<keyword id="KW-0812">Transmembrane</keyword>
<keyword id="KW-1133">Transmembrane helix</keyword>
<dbReference type="EMBL" id="FJ165553">
    <property type="protein sequence ID" value="ACI04534.1"/>
    <property type="molecule type" value="mRNA"/>
</dbReference>
<dbReference type="EMBL" id="BX284606">
    <property type="protein sequence ID" value="CAA86863.3"/>
    <property type="molecule type" value="Genomic_DNA"/>
</dbReference>
<dbReference type="PIR" id="T21729">
    <property type="entry name" value="T21729"/>
</dbReference>
<dbReference type="RefSeq" id="NP_509626.2">
    <property type="nucleotide sequence ID" value="NM_077225.5"/>
</dbReference>
<dbReference type="SMR" id="G5ECD9"/>
<dbReference type="STRING" id="6239.T14B1.2.1"/>
<dbReference type="GlyCosmos" id="G5ECD9">
    <property type="glycosylation" value="3 sites, No reported glycans"/>
</dbReference>
<dbReference type="PaxDb" id="6239-T14B1.2"/>
<dbReference type="EnsemblMetazoa" id="T14B1.2.1">
    <property type="protein sequence ID" value="T14B1.2.1"/>
    <property type="gene ID" value="WBGene00000085"/>
</dbReference>
<dbReference type="GeneID" id="188491"/>
<dbReference type="KEGG" id="cel:CELE_T14B1.2"/>
<dbReference type="AGR" id="WB:WBGene00000085"/>
<dbReference type="CTD" id="188491"/>
<dbReference type="WormBase" id="T14B1.2">
    <property type="protein sequence ID" value="CE31607"/>
    <property type="gene ID" value="WBGene00000085"/>
    <property type="gene designation" value="aex-2"/>
</dbReference>
<dbReference type="eggNOG" id="ENOG502S9TI">
    <property type="taxonomic scope" value="Eukaryota"/>
</dbReference>
<dbReference type="GeneTree" id="ENSGT00970000196027"/>
<dbReference type="HOGENOM" id="CLU_872214_0_0_1"/>
<dbReference type="InParanoid" id="G5ECD9"/>
<dbReference type="OMA" id="LMCIVYM"/>
<dbReference type="OrthoDB" id="5781782at2759"/>
<dbReference type="PhylomeDB" id="G5ECD9"/>
<dbReference type="PRO" id="PR:G5ECD9"/>
<dbReference type="Proteomes" id="UP000001940">
    <property type="component" value="Chromosome X"/>
</dbReference>
<dbReference type="Bgee" id="WBGene00000085">
    <property type="expression patterns" value="Expressed in larva and 3 other cell types or tissues"/>
</dbReference>
<dbReference type="GO" id="GO:0005929">
    <property type="term" value="C:cilium"/>
    <property type="evidence" value="ECO:0007669"/>
    <property type="project" value="UniProtKB-SubCell"/>
</dbReference>
<dbReference type="GO" id="GO:0005886">
    <property type="term" value="C:plasma membrane"/>
    <property type="evidence" value="ECO:0007669"/>
    <property type="project" value="UniProtKB-SubCell"/>
</dbReference>
<dbReference type="GO" id="GO:0008188">
    <property type="term" value="F:neuropeptide receptor activity"/>
    <property type="evidence" value="ECO:0000305"/>
    <property type="project" value="WormBase"/>
</dbReference>
<dbReference type="GO" id="GO:0010877">
    <property type="term" value="P:lipid transport involved in lipid storage"/>
    <property type="evidence" value="ECO:0000315"/>
    <property type="project" value="UniProtKB"/>
</dbReference>
<dbReference type="GO" id="GO:0007218">
    <property type="term" value="P:neuropeptide signaling pathway"/>
    <property type="evidence" value="ECO:0000314"/>
    <property type="project" value="WormBase"/>
</dbReference>
<dbReference type="GO" id="GO:2000294">
    <property type="term" value="P:positive regulation of defecation"/>
    <property type="evidence" value="ECO:0000315"/>
    <property type="project" value="UniProtKB"/>
</dbReference>
<dbReference type="GO" id="GO:1904731">
    <property type="term" value="P:positive regulation of intestinal lipid absorption"/>
    <property type="evidence" value="ECO:0000315"/>
    <property type="project" value="UniProtKB"/>
</dbReference>
<dbReference type="GO" id="GO:1905885">
    <property type="term" value="P:positive regulation of triglyceride transport"/>
    <property type="evidence" value="ECO:0000315"/>
    <property type="project" value="UniProtKB"/>
</dbReference>
<dbReference type="GO" id="GO:2000292">
    <property type="term" value="P:regulation of defecation"/>
    <property type="evidence" value="ECO:0000316"/>
    <property type="project" value="UniProtKB"/>
</dbReference>
<dbReference type="CDD" id="cd00637">
    <property type="entry name" value="7tm_classA_rhodopsin-like"/>
    <property type="match status" value="1"/>
</dbReference>
<dbReference type="FunFam" id="1.20.1070.10:FF:000969">
    <property type="entry name" value="G-protein coupled receptor aex-2"/>
    <property type="match status" value="1"/>
</dbReference>
<dbReference type="Gene3D" id="1.20.1070.10">
    <property type="entry name" value="Rhodopsin 7-helix transmembrane proteins"/>
    <property type="match status" value="1"/>
</dbReference>
<dbReference type="InterPro" id="IPR039952">
    <property type="entry name" value="Aex-2"/>
</dbReference>
<dbReference type="InterPro" id="IPR000276">
    <property type="entry name" value="GPCR_Rhodpsn"/>
</dbReference>
<dbReference type="InterPro" id="IPR017452">
    <property type="entry name" value="GPCR_Rhodpsn_7TM"/>
</dbReference>
<dbReference type="PANTHER" id="PTHR21643:SF2">
    <property type="entry name" value="G-PROTEIN COUPLED RECEPTOR AEX-2"/>
    <property type="match status" value="1"/>
</dbReference>
<dbReference type="PANTHER" id="PTHR21643">
    <property type="entry name" value="G-PROTEIN COUPLED RECEPTORS FAMILY 1 PROFILE DOMAIN-CONTAINING PROTEIN-RELATED"/>
    <property type="match status" value="1"/>
</dbReference>
<dbReference type="Pfam" id="PF00001">
    <property type="entry name" value="7tm_1"/>
    <property type="match status" value="1"/>
</dbReference>
<dbReference type="PRINTS" id="PR00237">
    <property type="entry name" value="GPCRRHODOPSN"/>
</dbReference>
<dbReference type="SUPFAM" id="SSF81321">
    <property type="entry name" value="Family A G protein-coupled receptor-like"/>
    <property type="match status" value="1"/>
</dbReference>
<dbReference type="PROSITE" id="PS50262">
    <property type="entry name" value="G_PROTEIN_RECEP_F1_2"/>
    <property type="match status" value="1"/>
</dbReference>
<feature type="chain" id="PRO_0000438189" description="G-protein coupled receptor aex-2" evidence="7">
    <location>
        <begin position="1"/>
        <end position="321"/>
    </location>
</feature>
<feature type="topological domain" description="Extracellular" evidence="7">
    <location>
        <begin position="1"/>
        <end position="24"/>
    </location>
</feature>
<feature type="transmembrane region" description="Helical; Name=1" evidence="1">
    <location>
        <begin position="25"/>
        <end position="45"/>
    </location>
</feature>
<feature type="topological domain" description="Cytoplasmic" evidence="7">
    <location>
        <begin position="46"/>
        <end position="55"/>
    </location>
</feature>
<feature type="transmembrane region" description="Helical; Name=2" evidence="1">
    <location>
        <begin position="56"/>
        <end position="76"/>
    </location>
</feature>
<feature type="topological domain" description="Extracellular" evidence="7">
    <location>
        <begin position="77"/>
        <end position="90"/>
    </location>
</feature>
<feature type="transmembrane region" description="Helical; Name=3" evidence="1">
    <location>
        <begin position="91"/>
        <end position="111"/>
    </location>
</feature>
<feature type="topological domain" description="Cytoplasmic" evidence="7">
    <location>
        <begin position="112"/>
        <end position="132"/>
    </location>
</feature>
<feature type="transmembrane region" description="Helical; Name=4" evidence="1">
    <location>
        <begin position="133"/>
        <end position="153"/>
    </location>
</feature>
<feature type="topological domain" description="Extracellular" evidence="7">
    <location>
        <begin position="154"/>
        <end position="175"/>
    </location>
</feature>
<feature type="transmembrane region" description="Helical; Name=5" evidence="1">
    <location>
        <begin position="176"/>
        <end position="196"/>
    </location>
</feature>
<feature type="topological domain" description="Cytoplasmic" evidence="7">
    <location>
        <begin position="197"/>
        <end position="221"/>
    </location>
</feature>
<feature type="transmembrane region" description="Helical; Name=6" evidence="1">
    <location>
        <begin position="222"/>
        <end position="242"/>
    </location>
</feature>
<feature type="topological domain" description="Extracellular" evidence="7">
    <location>
        <begin position="243"/>
        <end position="254"/>
    </location>
</feature>
<feature type="transmembrane region" description="Helical; Name=7" evidence="1">
    <location>
        <begin position="255"/>
        <end position="275"/>
    </location>
</feature>
<feature type="topological domain" description="Cytoplasmic" evidence="7">
    <location>
        <begin position="276"/>
        <end position="321"/>
    </location>
</feature>
<feature type="glycosylation site" description="N-linked (GlcNAc...) asparagine" evidence="2">
    <location>
        <position position="2"/>
    </location>
</feature>
<feature type="glycosylation site" description="N-linked (GlcNAc...) asparagine" evidence="2">
    <location>
        <position position="9"/>
    </location>
</feature>
<feature type="glycosylation site" description="N-linked (GlcNAc...) asparagine" evidence="2">
    <location>
        <position position="17"/>
    </location>
</feature>
<feature type="disulfide bond" evidence="3">
    <location>
        <begin position="88"/>
        <end position="161"/>
    </location>
</feature>
<feature type="mutagenesis site" description="In sa1040; Defecation defect." evidence="4">
    <original>S</original>
    <variation>G</variation>
    <location>
        <position position="174"/>
    </location>
</feature>
<feature type="mutagenesis site" description="In sa3; Defecation defect. Reduced fatty acid uptake into the cytoplasm of intestinal cells and reduced triglycerides in the intestine." evidence="4 6">
    <original>R</original>
    <variation>Q</variation>
    <location>
        <position position="232"/>
    </location>
</feature>
<sequence length="321" mass="37742">MNSTDIIANVTKPFVENLTLGETAFYISCGIVGTVFNALVLWIALTYINTEDKPRQIIVINMTVADLLMCIVYMKTRPWLSHFNLWLCHPYYVIIWTCQMCSCLNLVWLNVDKLIYIQFPLHYYQIVNRKRLLWITAATWGGLYAMNIALVTFLKITRGSCLGVSLNPYVYLLSPIFYVVMILTSFSLSALIYCIAHNLTHMEERQRSKLFRRLFFLFSSTLWTFFTCLPYRLLYLFSIFCGETCQINNYYKTATNLFFRLLIVGIMINPVITIWTQRIYRLRLMRMFGRLRENSSTEVLMVSNRRASERPPEHTPLRCDM</sequence>
<organism evidence="9">
    <name type="scientific">Caenorhabditis elegans</name>
    <dbReference type="NCBI Taxonomy" id="6239"/>
    <lineage>
        <taxon>Eukaryota</taxon>
        <taxon>Metazoa</taxon>
        <taxon>Ecdysozoa</taxon>
        <taxon>Nematoda</taxon>
        <taxon>Chromadorea</taxon>
        <taxon>Rhabditida</taxon>
        <taxon>Rhabditina</taxon>
        <taxon>Rhabditomorpha</taxon>
        <taxon>Rhabditoidea</taxon>
        <taxon>Rhabditidae</taxon>
        <taxon>Peloderinae</taxon>
        <taxon>Caenorhabditis</taxon>
    </lineage>
</organism>
<proteinExistence type="evidence at protein level"/>